<reference key="1">
    <citation type="journal article" date="1999" name="Nature">
        <title>Sequence and analysis of chromosome 2 of the plant Arabidopsis thaliana.</title>
        <authorList>
            <person name="Lin X."/>
            <person name="Kaul S."/>
            <person name="Rounsley S.D."/>
            <person name="Shea T.P."/>
            <person name="Benito M.-I."/>
            <person name="Town C.D."/>
            <person name="Fujii C.Y."/>
            <person name="Mason T.M."/>
            <person name="Bowman C.L."/>
            <person name="Barnstead M.E."/>
            <person name="Feldblyum T.V."/>
            <person name="Buell C.R."/>
            <person name="Ketchum K.A."/>
            <person name="Lee J.J."/>
            <person name="Ronning C.M."/>
            <person name="Koo H.L."/>
            <person name="Moffat K.S."/>
            <person name="Cronin L.A."/>
            <person name="Shen M."/>
            <person name="Pai G."/>
            <person name="Van Aken S."/>
            <person name="Umayam L."/>
            <person name="Tallon L.J."/>
            <person name="Gill J.E."/>
            <person name="Adams M.D."/>
            <person name="Carrera A.J."/>
            <person name="Creasy T.H."/>
            <person name="Goodman H.M."/>
            <person name="Somerville C.R."/>
            <person name="Copenhaver G.P."/>
            <person name="Preuss D."/>
            <person name="Nierman W.C."/>
            <person name="White O."/>
            <person name="Eisen J.A."/>
            <person name="Salzberg S.L."/>
            <person name="Fraser C.M."/>
            <person name="Venter J.C."/>
        </authorList>
    </citation>
    <scope>NUCLEOTIDE SEQUENCE [LARGE SCALE GENOMIC DNA]</scope>
    <source>
        <strain>cv. Columbia</strain>
    </source>
</reference>
<reference key="2">
    <citation type="journal article" date="2017" name="Plant J.">
        <title>Araport11: a complete reannotation of the Arabidopsis thaliana reference genome.</title>
        <authorList>
            <person name="Cheng C.Y."/>
            <person name="Krishnakumar V."/>
            <person name="Chan A.P."/>
            <person name="Thibaud-Nissen F."/>
            <person name="Schobel S."/>
            <person name="Town C.D."/>
        </authorList>
    </citation>
    <scope>GENOME REANNOTATION</scope>
    <source>
        <strain>cv. Columbia</strain>
    </source>
</reference>
<reference key="3">
    <citation type="journal article" date="2003" name="Science">
        <title>Empirical analysis of transcriptional activity in the Arabidopsis genome.</title>
        <authorList>
            <person name="Yamada K."/>
            <person name="Lim J."/>
            <person name="Dale J.M."/>
            <person name="Chen H."/>
            <person name="Shinn P."/>
            <person name="Palm C.J."/>
            <person name="Southwick A.M."/>
            <person name="Wu H.C."/>
            <person name="Kim C.J."/>
            <person name="Nguyen M."/>
            <person name="Pham P.K."/>
            <person name="Cheuk R.F."/>
            <person name="Karlin-Newmann G."/>
            <person name="Liu S.X."/>
            <person name="Lam B."/>
            <person name="Sakano H."/>
            <person name="Wu T."/>
            <person name="Yu G."/>
            <person name="Miranda M."/>
            <person name="Quach H.L."/>
            <person name="Tripp M."/>
            <person name="Chang C.H."/>
            <person name="Lee J.M."/>
            <person name="Toriumi M.J."/>
            <person name="Chan M.M."/>
            <person name="Tang C.C."/>
            <person name="Onodera C.S."/>
            <person name="Deng J.M."/>
            <person name="Akiyama K."/>
            <person name="Ansari Y."/>
            <person name="Arakawa T."/>
            <person name="Banh J."/>
            <person name="Banno F."/>
            <person name="Bowser L."/>
            <person name="Brooks S.Y."/>
            <person name="Carninci P."/>
            <person name="Chao Q."/>
            <person name="Choy N."/>
            <person name="Enju A."/>
            <person name="Goldsmith A.D."/>
            <person name="Gurjal M."/>
            <person name="Hansen N.F."/>
            <person name="Hayashizaki Y."/>
            <person name="Johnson-Hopson C."/>
            <person name="Hsuan V.W."/>
            <person name="Iida K."/>
            <person name="Karnes M."/>
            <person name="Khan S."/>
            <person name="Koesema E."/>
            <person name="Ishida J."/>
            <person name="Jiang P.X."/>
            <person name="Jones T."/>
            <person name="Kawai J."/>
            <person name="Kamiya A."/>
            <person name="Meyers C."/>
            <person name="Nakajima M."/>
            <person name="Narusaka M."/>
            <person name="Seki M."/>
            <person name="Sakurai T."/>
            <person name="Satou M."/>
            <person name="Tamse R."/>
            <person name="Vaysberg M."/>
            <person name="Wallender E.K."/>
            <person name="Wong C."/>
            <person name="Yamamura Y."/>
            <person name="Yuan S."/>
            <person name="Shinozaki K."/>
            <person name="Davis R.W."/>
            <person name="Theologis A."/>
            <person name="Ecker J.R."/>
        </authorList>
    </citation>
    <scope>NUCLEOTIDE SEQUENCE [LARGE SCALE MRNA]</scope>
    <source>
        <strain>cv. Columbia</strain>
    </source>
</reference>
<reference key="4">
    <citation type="journal article" date="2009" name="BMC Genomics">
        <title>Genome wide expression analysis of CBS domain containing proteins in Arabidopsis thaliana (L.) Heynh and Oryza sativa L. reveals their developmental and stress regulation.</title>
        <authorList>
            <person name="Kushwaha H.R."/>
            <person name="Singh A.K."/>
            <person name="Sopory S.K."/>
            <person name="Singla-Pareek S.L."/>
            <person name="Pareek A."/>
        </authorList>
    </citation>
    <scope>GENE FAMILY</scope>
    <scope>NOMENCLATURE</scope>
</reference>
<sequence length="536" mass="58448">MTTTPTSSGRRSISSIRRTSSASKKPVLQSEESESGSGSINENTSKPDSPLAQPVSDGERTVKKLRLSKALTINEGTTVFDACRRMAARRVDAVLLTDSSALLSGIVTDKDIATRVIAEGLRPEHTLVSKVMTRNPIFVTSDSLAIEALQKMVQGKFRHLPVVENGEVIALLDITKCLYDAISRMEKAAEQGSALATAVEERHWGSGNFAFIDTLRERMFKPALSTIVTENTKVALVSASDPVFVASKKMRDLRVNSVIIAVGNKIHGILTSKDILMRVVAQNLSPELTLVEKVMTPNPECASIETTILDALHIMHDGKFLHLPVFDKDGFAVACLDVLQITHAAISTVENNSSGAVNDMANTMMQKFWDSALALEPPEDYETHSDMSAMLINSEGKQSCPSQGLVSSFAFKFEDRKGRVQRFNSTGESFEELMSVVMQRCEADSGLQIMYQDDEGDKVLISRDSDLVAAVTFARSLGQKVLRLHLDFTETIAPLETIADLSEGNGGCVWWQTGVLAGAIVLTSIGLFVYLKRSKK</sequence>
<name>Y2650_ARATH</name>
<organism>
    <name type="scientific">Arabidopsis thaliana</name>
    <name type="common">Mouse-ear cress</name>
    <dbReference type="NCBI Taxonomy" id="3702"/>
    <lineage>
        <taxon>Eukaryota</taxon>
        <taxon>Viridiplantae</taxon>
        <taxon>Streptophyta</taxon>
        <taxon>Embryophyta</taxon>
        <taxon>Tracheophyta</taxon>
        <taxon>Spermatophyta</taxon>
        <taxon>Magnoliopsida</taxon>
        <taxon>eudicotyledons</taxon>
        <taxon>Gunneridae</taxon>
        <taxon>Pentapetalae</taxon>
        <taxon>rosids</taxon>
        <taxon>malvids</taxon>
        <taxon>Brassicales</taxon>
        <taxon>Brassicaceae</taxon>
        <taxon>Camelineae</taxon>
        <taxon>Arabidopsis</taxon>
    </lineage>
</organism>
<protein>
    <recommendedName>
        <fullName>CBS domain-containing protein CBSCBSPB2</fullName>
    </recommendedName>
</protein>
<dbReference type="EMBL" id="AC006919">
    <property type="protein sequence ID" value="AAD24634.1"/>
    <property type="molecule type" value="Genomic_DNA"/>
</dbReference>
<dbReference type="EMBL" id="CP002685">
    <property type="protein sequence ID" value="AEC09264.1"/>
    <property type="molecule type" value="Genomic_DNA"/>
</dbReference>
<dbReference type="EMBL" id="BT005736">
    <property type="protein sequence ID" value="AAO64148.1"/>
    <property type="molecule type" value="mRNA"/>
</dbReference>
<dbReference type="PIR" id="E84781">
    <property type="entry name" value="E84781"/>
</dbReference>
<dbReference type="RefSeq" id="NP_181191.1">
    <property type="nucleotide sequence ID" value="NM_129208.4"/>
</dbReference>
<dbReference type="SMR" id="Q9SJQ5"/>
<dbReference type="FunCoup" id="Q9SJQ5">
    <property type="interactions" value="1"/>
</dbReference>
<dbReference type="STRING" id="3702.Q9SJQ5"/>
<dbReference type="iPTMnet" id="Q9SJQ5"/>
<dbReference type="PaxDb" id="3702-AT2G36500.1"/>
<dbReference type="ProteomicsDB" id="232418"/>
<dbReference type="EnsemblPlants" id="AT2G36500.1">
    <property type="protein sequence ID" value="AT2G36500.1"/>
    <property type="gene ID" value="AT2G36500"/>
</dbReference>
<dbReference type="GeneID" id="818225"/>
<dbReference type="Gramene" id="AT2G36500.1">
    <property type="protein sequence ID" value="AT2G36500.1"/>
    <property type="gene ID" value="AT2G36500"/>
</dbReference>
<dbReference type="KEGG" id="ath:AT2G36500"/>
<dbReference type="Araport" id="AT2G36500"/>
<dbReference type="TAIR" id="AT2G36500"/>
<dbReference type="eggNOG" id="ENOG502QVK2">
    <property type="taxonomic scope" value="Eukaryota"/>
</dbReference>
<dbReference type="HOGENOM" id="CLU_009026_3_0_1"/>
<dbReference type="InParanoid" id="Q9SJQ5"/>
<dbReference type="OMA" id="PHAFIET"/>
<dbReference type="OrthoDB" id="418595at2759"/>
<dbReference type="PhylomeDB" id="Q9SJQ5"/>
<dbReference type="PRO" id="PR:Q9SJQ5"/>
<dbReference type="Proteomes" id="UP000006548">
    <property type="component" value="Chromosome 2"/>
</dbReference>
<dbReference type="ExpressionAtlas" id="Q9SJQ5">
    <property type="expression patterns" value="baseline and differential"/>
</dbReference>
<dbReference type="GO" id="GO:0016020">
    <property type="term" value="C:membrane"/>
    <property type="evidence" value="ECO:0007669"/>
    <property type="project" value="UniProtKB-SubCell"/>
</dbReference>
<dbReference type="CDD" id="cd17781">
    <property type="entry name" value="CBS_pair_MUG70_1"/>
    <property type="match status" value="1"/>
</dbReference>
<dbReference type="CDD" id="cd17782">
    <property type="entry name" value="CBS_pair_MUG70_2"/>
    <property type="match status" value="1"/>
</dbReference>
<dbReference type="CDD" id="cd06409">
    <property type="entry name" value="PB1_MUG70"/>
    <property type="match status" value="1"/>
</dbReference>
<dbReference type="Gene3D" id="3.10.580.10">
    <property type="entry name" value="CBS-domain"/>
    <property type="match status" value="2"/>
</dbReference>
<dbReference type="Gene3D" id="3.10.20.90">
    <property type="entry name" value="Phosphatidylinositol 3-kinase Catalytic Subunit, Chain A, domain 1"/>
    <property type="match status" value="1"/>
</dbReference>
<dbReference type="InterPro" id="IPR000644">
    <property type="entry name" value="CBS_dom"/>
</dbReference>
<dbReference type="InterPro" id="IPR046342">
    <property type="entry name" value="CBS_dom_sf"/>
</dbReference>
<dbReference type="InterPro" id="IPR051462">
    <property type="entry name" value="CBS_domain-containing"/>
</dbReference>
<dbReference type="InterPro" id="IPR053793">
    <property type="entry name" value="PB1-like"/>
</dbReference>
<dbReference type="InterPro" id="IPR000270">
    <property type="entry name" value="PB1_dom"/>
</dbReference>
<dbReference type="PANTHER" id="PTHR48108">
    <property type="entry name" value="CBS DOMAIN-CONTAINING PROTEIN CBSX2, CHLOROPLASTIC"/>
    <property type="match status" value="1"/>
</dbReference>
<dbReference type="PANTHER" id="PTHR48108:SF26">
    <property type="entry name" value="CBS DOMAIN-CONTAINING PROTEIN DDB_G0289609"/>
    <property type="match status" value="1"/>
</dbReference>
<dbReference type="Pfam" id="PF00571">
    <property type="entry name" value="CBS"/>
    <property type="match status" value="4"/>
</dbReference>
<dbReference type="Pfam" id="PF00564">
    <property type="entry name" value="PB1"/>
    <property type="match status" value="1"/>
</dbReference>
<dbReference type="SMART" id="SM00116">
    <property type="entry name" value="CBS"/>
    <property type="match status" value="4"/>
</dbReference>
<dbReference type="SMART" id="SM00666">
    <property type="entry name" value="PB1"/>
    <property type="match status" value="1"/>
</dbReference>
<dbReference type="SUPFAM" id="SSF54277">
    <property type="entry name" value="CAD &amp; PB1 domains"/>
    <property type="match status" value="1"/>
</dbReference>
<dbReference type="SUPFAM" id="SSF54631">
    <property type="entry name" value="CBS-domain pair"/>
    <property type="match status" value="2"/>
</dbReference>
<dbReference type="PROSITE" id="PS51371">
    <property type="entry name" value="CBS"/>
    <property type="match status" value="4"/>
</dbReference>
<dbReference type="PROSITE" id="PS51745">
    <property type="entry name" value="PB1"/>
    <property type="match status" value="1"/>
</dbReference>
<feature type="chain" id="PRO_0000412228" description="CBS domain-containing protein CBSCBSPB2">
    <location>
        <begin position="1"/>
        <end position="536"/>
    </location>
</feature>
<feature type="transmembrane region" description="Helical" evidence="1">
    <location>
        <begin position="509"/>
        <end position="529"/>
    </location>
</feature>
<feature type="domain" description="CBS 1" evidence="2">
    <location>
        <begin position="66"/>
        <end position="124"/>
    </location>
</feature>
<feature type="domain" description="CBS 2" evidence="2">
    <location>
        <begin position="132"/>
        <end position="187"/>
    </location>
</feature>
<feature type="domain" description="CBS 3" evidence="2">
    <location>
        <begin position="228"/>
        <end position="287"/>
    </location>
</feature>
<feature type="domain" description="CBS 4" evidence="2">
    <location>
        <begin position="295"/>
        <end position="354"/>
    </location>
</feature>
<feature type="domain" description="PB1" evidence="3">
    <location>
        <begin position="406"/>
        <end position="489"/>
    </location>
</feature>
<feature type="region of interest" description="Disordered" evidence="4">
    <location>
        <begin position="1"/>
        <end position="60"/>
    </location>
</feature>
<feature type="compositionally biased region" description="Low complexity" evidence="4">
    <location>
        <begin position="1"/>
        <end position="23"/>
    </location>
</feature>
<feature type="sequence conflict" description="In Ref. 3; AAO64148." evidence="5" ref="3">
    <original>L</original>
    <variation>P</variation>
    <location>
        <position position="127"/>
    </location>
</feature>
<evidence type="ECO:0000255" key="1"/>
<evidence type="ECO:0000255" key="2">
    <source>
        <dbReference type="PROSITE-ProRule" id="PRU00703"/>
    </source>
</evidence>
<evidence type="ECO:0000255" key="3">
    <source>
        <dbReference type="PROSITE-ProRule" id="PRU01081"/>
    </source>
</evidence>
<evidence type="ECO:0000256" key="4">
    <source>
        <dbReference type="SAM" id="MobiDB-lite"/>
    </source>
</evidence>
<evidence type="ECO:0000305" key="5"/>
<proteinExistence type="evidence at transcript level"/>
<accession>Q9SJQ5</accession>
<accession>Q84TJ1</accession>
<comment type="subcellular location">
    <subcellularLocation>
        <location evidence="5">Membrane</location>
        <topology evidence="5">Single-pass membrane protein</topology>
    </subcellularLocation>
</comment>
<keyword id="KW-0129">CBS domain</keyword>
<keyword id="KW-0472">Membrane</keyword>
<keyword id="KW-1185">Reference proteome</keyword>
<keyword id="KW-0677">Repeat</keyword>
<keyword id="KW-0812">Transmembrane</keyword>
<keyword id="KW-1133">Transmembrane helix</keyword>
<gene>
    <name type="primary">CBSCBSPB2</name>
    <name type="ordered locus">At2g36500</name>
    <name type="ORF">F1O11.13</name>
</gene>